<comment type="function">
    <text evidence="1">Catalyzes the conversion of (8S)-3',8-cyclo-7,8-dihydroguanosine 5'-triphosphate to cyclic pyranopterin monophosphate (cPMP).</text>
</comment>
<comment type="catalytic activity">
    <reaction evidence="1">
        <text>(8S)-3',8-cyclo-7,8-dihydroguanosine 5'-triphosphate = cyclic pyranopterin phosphate + diphosphate</text>
        <dbReference type="Rhea" id="RHEA:49580"/>
        <dbReference type="ChEBI" id="CHEBI:33019"/>
        <dbReference type="ChEBI" id="CHEBI:59648"/>
        <dbReference type="ChEBI" id="CHEBI:131766"/>
        <dbReference type="EC" id="4.6.1.17"/>
    </reaction>
</comment>
<comment type="pathway">
    <text evidence="1">Cofactor biosynthesis; molybdopterin biosynthesis.</text>
</comment>
<comment type="subunit">
    <text evidence="1">Homohexamer; trimer of dimers.</text>
</comment>
<comment type="similarity">
    <text evidence="1">Belongs to the MoaC family.</text>
</comment>
<name>MOAC_CAMJJ</name>
<proteinExistence type="inferred from homology"/>
<sequence>MKLSHLDEKNHPKMVDVGDKNITSRIATASGMIYMSQEAFDVIKNNTAKKGPVLQTAIIAAIMGAKKTSEIIPMCHPLMLSKVETDIMEFVKECAFKLIVTVKCEGKTGVEMEALSGVSIGLLTIYDMIKAIDKSMRITDIVLESKEGGKSGKFVRS</sequence>
<dbReference type="EC" id="4.6.1.17" evidence="1"/>
<dbReference type="EMBL" id="CP000538">
    <property type="protein sequence ID" value="EAQ73124.1"/>
    <property type="molecule type" value="Genomic_DNA"/>
</dbReference>
<dbReference type="RefSeq" id="WP_009881967.1">
    <property type="nucleotide sequence ID" value="NC_008787.1"/>
</dbReference>
<dbReference type="SMR" id="A1VXX6"/>
<dbReference type="KEGG" id="cjj:CJJ81176_0279"/>
<dbReference type="eggNOG" id="COG0315">
    <property type="taxonomic scope" value="Bacteria"/>
</dbReference>
<dbReference type="HOGENOM" id="CLU_074693_1_1_7"/>
<dbReference type="UniPathway" id="UPA00344"/>
<dbReference type="Proteomes" id="UP000000646">
    <property type="component" value="Chromosome"/>
</dbReference>
<dbReference type="GO" id="GO:0061799">
    <property type="term" value="F:cyclic pyranopterin monophosphate synthase activity"/>
    <property type="evidence" value="ECO:0007669"/>
    <property type="project" value="UniProtKB-UniRule"/>
</dbReference>
<dbReference type="GO" id="GO:0061798">
    <property type="term" value="F:GTP 3',8'-cyclase activity"/>
    <property type="evidence" value="ECO:0007669"/>
    <property type="project" value="TreeGrafter"/>
</dbReference>
<dbReference type="GO" id="GO:0006777">
    <property type="term" value="P:Mo-molybdopterin cofactor biosynthetic process"/>
    <property type="evidence" value="ECO:0007669"/>
    <property type="project" value="UniProtKB-UniRule"/>
</dbReference>
<dbReference type="CDD" id="cd01420">
    <property type="entry name" value="MoaC_PE"/>
    <property type="match status" value="1"/>
</dbReference>
<dbReference type="Gene3D" id="3.30.70.640">
    <property type="entry name" value="Molybdopterin cofactor biosynthesis C (MoaC) domain"/>
    <property type="match status" value="1"/>
</dbReference>
<dbReference type="HAMAP" id="MF_01224_B">
    <property type="entry name" value="MoaC_B"/>
    <property type="match status" value="1"/>
</dbReference>
<dbReference type="InterPro" id="IPR023045">
    <property type="entry name" value="MoaC"/>
</dbReference>
<dbReference type="InterPro" id="IPR047594">
    <property type="entry name" value="MoaC_bact/euk"/>
</dbReference>
<dbReference type="InterPro" id="IPR036522">
    <property type="entry name" value="MoaC_sf"/>
</dbReference>
<dbReference type="InterPro" id="IPR050105">
    <property type="entry name" value="MoCo_biosynth_MoaA/MoaC"/>
</dbReference>
<dbReference type="InterPro" id="IPR002820">
    <property type="entry name" value="Mopterin_CF_biosynth-C_dom"/>
</dbReference>
<dbReference type="NCBIfam" id="TIGR00581">
    <property type="entry name" value="moaC"/>
    <property type="match status" value="1"/>
</dbReference>
<dbReference type="NCBIfam" id="NF006870">
    <property type="entry name" value="PRK09364.1"/>
    <property type="match status" value="1"/>
</dbReference>
<dbReference type="PANTHER" id="PTHR22960:SF0">
    <property type="entry name" value="MOLYBDENUM COFACTOR BIOSYNTHESIS PROTEIN 1"/>
    <property type="match status" value="1"/>
</dbReference>
<dbReference type="PANTHER" id="PTHR22960">
    <property type="entry name" value="MOLYBDOPTERIN COFACTOR SYNTHESIS PROTEIN A"/>
    <property type="match status" value="1"/>
</dbReference>
<dbReference type="Pfam" id="PF01967">
    <property type="entry name" value="MoaC"/>
    <property type="match status" value="1"/>
</dbReference>
<dbReference type="SUPFAM" id="SSF55040">
    <property type="entry name" value="Molybdenum cofactor biosynthesis protein C, MoaC"/>
    <property type="match status" value="1"/>
</dbReference>
<reference key="1">
    <citation type="submission" date="2006-12" db="EMBL/GenBank/DDBJ databases">
        <authorList>
            <person name="Fouts D.E."/>
            <person name="Nelson K.E."/>
            <person name="Sebastian Y."/>
        </authorList>
    </citation>
    <scope>NUCLEOTIDE SEQUENCE [LARGE SCALE GENOMIC DNA]</scope>
    <source>
        <strain>81-176</strain>
    </source>
</reference>
<organism>
    <name type="scientific">Campylobacter jejuni subsp. jejuni serotype O:23/36 (strain 81-176)</name>
    <dbReference type="NCBI Taxonomy" id="354242"/>
    <lineage>
        <taxon>Bacteria</taxon>
        <taxon>Pseudomonadati</taxon>
        <taxon>Campylobacterota</taxon>
        <taxon>Epsilonproteobacteria</taxon>
        <taxon>Campylobacterales</taxon>
        <taxon>Campylobacteraceae</taxon>
        <taxon>Campylobacter</taxon>
    </lineage>
</organism>
<gene>
    <name evidence="1" type="primary">moaC</name>
    <name type="ordered locus">CJJ81176_0279</name>
</gene>
<keyword id="KW-0456">Lyase</keyword>
<keyword id="KW-0501">Molybdenum cofactor biosynthesis</keyword>
<accession>A1VXX6</accession>
<protein>
    <recommendedName>
        <fullName evidence="1">Cyclic pyranopterin monophosphate synthase</fullName>
        <ecNumber evidence="1">4.6.1.17</ecNumber>
    </recommendedName>
    <alternativeName>
        <fullName evidence="1">Molybdenum cofactor biosynthesis protein C</fullName>
    </alternativeName>
</protein>
<evidence type="ECO:0000255" key="1">
    <source>
        <dbReference type="HAMAP-Rule" id="MF_01224"/>
    </source>
</evidence>
<feature type="chain" id="PRO_1000054082" description="Cyclic pyranopterin monophosphate synthase">
    <location>
        <begin position="1"/>
        <end position="157"/>
    </location>
</feature>
<feature type="active site" evidence="1">
    <location>
        <position position="127"/>
    </location>
</feature>
<feature type="binding site" evidence="1">
    <location>
        <begin position="74"/>
        <end position="76"/>
    </location>
    <ligand>
        <name>substrate</name>
    </ligand>
</feature>
<feature type="binding site" evidence="1">
    <location>
        <begin position="112"/>
        <end position="113"/>
    </location>
    <ligand>
        <name>substrate</name>
    </ligand>
</feature>